<feature type="chain" id="PRO_1000145398" description="Peptide methionine sulfoxide reductase MsrA">
    <location>
        <begin position="1"/>
        <end position="217"/>
    </location>
</feature>
<feature type="active site" evidence="1">
    <location>
        <position position="56"/>
    </location>
</feature>
<organism>
    <name type="scientific">Rippkaea orientalis (strain PCC 8801 / RF-1)</name>
    <name type="common">Cyanothece sp. (strain PCC 8801)</name>
    <dbReference type="NCBI Taxonomy" id="41431"/>
    <lineage>
        <taxon>Bacteria</taxon>
        <taxon>Bacillati</taxon>
        <taxon>Cyanobacteriota</taxon>
        <taxon>Cyanophyceae</taxon>
        <taxon>Oscillatoriophycideae</taxon>
        <taxon>Chroococcales</taxon>
        <taxon>Aphanothecaceae</taxon>
        <taxon>Rippkaea</taxon>
        <taxon>Rippkaea orientalis</taxon>
    </lineage>
</organism>
<name>MSRA_RIPO1</name>
<dbReference type="EC" id="1.8.4.11" evidence="1"/>
<dbReference type="EMBL" id="CP001287">
    <property type="protein sequence ID" value="ACK66226.1"/>
    <property type="molecule type" value="Genomic_DNA"/>
</dbReference>
<dbReference type="RefSeq" id="WP_012595494.1">
    <property type="nucleotide sequence ID" value="NC_011726.1"/>
</dbReference>
<dbReference type="SMR" id="B7K079"/>
<dbReference type="STRING" id="41431.PCC8801_2198"/>
<dbReference type="KEGG" id="cyp:PCC8801_2198"/>
<dbReference type="eggNOG" id="COG0225">
    <property type="taxonomic scope" value="Bacteria"/>
</dbReference>
<dbReference type="HOGENOM" id="CLU_031040_10_3_3"/>
<dbReference type="OrthoDB" id="4174719at2"/>
<dbReference type="Proteomes" id="UP000008204">
    <property type="component" value="Chromosome"/>
</dbReference>
<dbReference type="GO" id="GO:0005737">
    <property type="term" value="C:cytoplasm"/>
    <property type="evidence" value="ECO:0007669"/>
    <property type="project" value="TreeGrafter"/>
</dbReference>
<dbReference type="GO" id="GO:0036456">
    <property type="term" value="F:L-methionine-(S)-S-oxide reductase activity"/>
    <property type="evidence" value="ECO:0007669"/>
    <property type="project" value="TreeGrafter"/>
</dbReference>
<dbReference type="GO" id="GO:0008113">
    <property type="term" value="F:peptide-methionine (S)-S-oxide reductase activity"/>
    <property type="evidence" value="ECO:0007669"/>
    <property type="project" value="UniProtKB-UniRule"/>
</dbReference>
<dbReference type="GO" id="GO:0034599">
    <property type="term" value="P:cellular response to oxidative stress"/>
    <property type="evidence" value="ECO:0007669"/>
    <property type="project" value="TreeGrafter"/>
</dbReference>
<dbReference type="GO" id="GO:0036211">
    <property type="term" value="P:protein modification process"/>
    <property type="evidence" value="ECO:0007669"/>
    <property type="project" value="UniProtKB-UniRule"/>
</dbReference>
<dbReference type="FunFam" id="3.30.1060.10:FF:000001">
    <property type="entry name" value="Peptide methionine sulfoxide reductase MsrA"/>
    <property type="match status" value="1"/>
</dbReference>
<dbReference type="Gene3D" id="3.30.1060.10">
    <property type="entry name" value="Peptide methionine sulphoxide reductase MsrA"/>
    <property type="match status" value="1"/>
</dbReference>
<dbReference type="HAMAP" id="MF_01401">
    <property type="entry name" value="MsrA"/>
    <property type="match status" value="1"/>
</dbReference>
<dbReference type="InterPro" id="IPR002569">
    <property type="entry name" value="Met_Sox_Rdtase_MsrA_dom"/>
</dbReference>
<dbReference type="InterPro" id="IPR036509">
    <property type="entry name" value="Met_Sox_Rdtase_MsrA_sf"/>
</dbReference>
<dbReference type="InterPro" id="IPR050162">
    <property type="entry name" value="MsrA_MetSO_reductase"/>
</dbReference>
<dbReference type="NCBIfam" id="TIGR00401">
    <property type="entry name" value="msrA"/>
    <property type="match status" value="1"/>
</dbReference>
<dbReference type="PANTHER" id="PTHR42799">
    <property type="entry name" value="MITOCHONDRIAL PEPTIDE METHIONINE SULFOXIDE REDUCTASE"/>
    <property type="match status" value="1"/>
</dbReference>
<dbReference type="PANTHER" id="PTHR42799:SF2">
    <property type="entry name" value="MITOCHONDRIAL PEPTIDE METHIONINE SULFOXIDE REDUCTASE"/>
    <property type="match status" value="1"/>
</dbReference>
<dbReference type="Pfam" id="PF01625">
    <property type="entry name" value="PMSR"/>
    <property type="match status" value="1"/>
</dbReference>
<dbReference type="SUPFAM" id="SSF55068">
    <property type="entry name" value="Peptide methionine sulfoxide reductase"/>
    <property type="match status" value="1"/>
</dbReference>
<proteinExistence type="inferred from homology"/>
<comment type="function">
    <text evidence="1">Has an important function as a repair enzyme for proteins that have been inactivated by oxidation. Catalyzes the reversible oxidation-reduction of methionine sulfoxide in proteins to methionine.</text>
</comment>
<comment type="catalytic activity">
    <reaction evidence="1">
        <text>L-methionyl-[protein] + [thioredoxin]-disulfide + H2O = L-methionyl-(S)-S-oxide-[protein] + [thioredoxin]-dithiol</text>
        <dbReference type="Rhea" id="RHEA:14217"/>
        <dbReference type="Rhea" id="RHEA-COMP:10698"/>
        <dbReference type="Rhea" id="RHEA-COMP:10700"/>
        <dbReference type="Rhea" id="RHEA-COMP:12313"/>
        <dbReference type="Rhea" id="RHEA-COMP:12315"/>
        <dbReference type="ChEBI" id="CHEBI:15377"/>
        <dbReference type="ChEBI" id="CHEBI:16044"/>
        <dbReference type="ChEBI" id="CHEBI:29950"/>
        <dbReference type="ChEBI" id="CHEBI:44120"/>
        <dbReference type="ChEBI" id="CHEBI:50058"/>
        <dbReference type="EC" id="1.8.4.11"/>
    </reaction>
</comment>
<comment type="catalytic activity">
    <reaction evidence="1">
        <text>[thioredoxin]-disulfide + L-methionine + H2O = L-methionine (S)-S-oxide + [thioredoxin]-dithiol</text>
        <dbReference type="Rhea" id="RHEA:19993"/>
        <dbReference type="Rhea" id="RHEA-COMP:10698"/>
        <dbReference type="Rhea" id="RHEA-COMP:10700"/>
        <dbReference type="ChEBI" id="CHEBI:15377"/>
        <dbReference type="ChEBI" id="CHEBI:29950"/>
        <dbReference type="ChEBI" id="CHEBI:50058"/>
        <dbReference type="ChEBI" id="CHEBI:57844"/>
        <dbReference type="ChEBI" id="CHEBI:58772"/>
        <dbReference type="EC" id="1.8.4.11"/>
    </reaction>
</comment>
<comment type="similarity">
    <text evidence="1">Belongs to the MsrA Met sulfoxide reductase family.</text>
</comment>
<protein>
    <recommendedName>
        <fullName evidence="1">Peptide methionine sulfoxide reductase MsrA</fullName>
        <shortName evidence="1">Protein-methionine-S-oxide reductase</shortName>
        <ecNumber evidence="1">1.8.4.11</ecNumber>
    </recommendedName>
    <alternativeName>
        <fullName evidence="1">Peptide-methionine (S)-S-oxide reductase</fullName>
        <shortName evidence="1">Peptide Met(O) reductase</shortName>
    </alternativeName>
</protein>
<accession>B7K079</accession>
<evidence type="ECO:0000255" key="1">
    <source>
        <dbReference type="HAMAP-Rule" id="MF_01401"/>
    </source>
</evidence>
<sequence length="217" mass="23898">MALFGFGKKLTLPTPETALPGRRQAMPVPASHYVNGHPLKPPFPSGLETAMFGLGCFWGAERKFWQCEGVYTTAVGYAAGITPNPTYQEVCTGLTGHNEVVLVVFDPKIISYEELLKVFWESHNPTQGMRQGNDVGTQYRSGIYVYSPQHKKAAETSKEVYQKALNQAGYGDITTEILDAPEFYYAEDYHQQYLAKNPNGYCGLGGTNVSCPIGLNV</sequence>
<gene>
    <name evidence="1" type="primary">msrA</name>
    <name type="ordered locus">PCC8801_2198</name>
</gene>
<keyword id="KW-0560">Oxidoreductase</keyword>
<keyword id="KW-1185">Reference proteome</keyword>
<reference key="1">
    <citation type="journal article" date="2011" name="MBio">
        <title>Novel metabolic attributes of the genus Cyanothece, comprising a group of unicellular nitrogen-fixing Cyanobacteria.</title>
        <authorList>
            <person name="Bandyopadhyay A."/>
            <person name="Elvitigala T."/>
            <person name="Welsh E."/>
            <person name="Stockel J."/>
            <person name="Liberton M."/>
            <person name="Min H."/>
            <person name="Sherman L.A."/>
            <person name="Pakrasi H.B."/>
        </authorList>
    </citation>
    <scope>NUCLEOTIDE SEQUENCE [LARGE SCALE GENOMIC DNA]</scope>
    <source>
        <strain>PCC 8801 / RF-1</strain>
    </source>
</reference>